<dbReference type="SMR" id="P0C166"/>
<dbReference type="GO" id="GO:0005576">
    <property type="term" value="C:extracellular region"/>
    <property type="evidence" value="ECO:0007669"/>
    <property type="project" value="UniProtKB-SubCell"/>
</dbReference>
<dbReference type="GO" id="GO:0008200">
    <property type="term" value="F:ion channel inhibitor activity"/>
    <property type="evidence" value="ECO:0007669"/>
    <property type="project" value="InterPro"/>
</dbReference>
<dbReference type="GO" id="GO:0015459">
    <property type="term" value="F:potassium channel regulator activity"/>
    <property type="evidence" value="ECO:0007669"/>
    <property type="project" value="UniProtKB-KW"/>
</dbReference>
<dbReference type="GO" id="GO:0090729">
    <property type="term" value="F:toxin activity"/>
    <property type="evidence" value="ECO:0007669"/>
    <property type="project" value="UniProtKB-KW"/>
</dbReference>
<dbReference type="Gene3D" id="3.30.30.10">
    <property type="entry name" value="Knottin, scorpion toxin-like"/>
    <property type="match status" value="1"/>
</dbReference>
<dbReference type="InterPro" id="IPR036574">
    <property type="entry name" value="Scorpion_toxin-like_sf"/>
</dbReference>
<dbReference type="InterPro" id="IPR001947">
    <property type="entry name" value="Scorpion_toxinS_K_inh"/>
</dbReference>
<dbReference type="Pfam" id="PF00451">
    <property type="entry name" value="Toxin_2"/>
    <property type="match status" value="1"/>
</dbReference>
<dbReference type="SUPFAM" id="SSF57095">
    <property type="entry name" value="Scorpion toxin-like"/>
    <property type="match status" value="1"/>
</dbReference>
<dbReference type="PROSITE" id="PS01138">
    <property type="entry name" value="SCORP_SHORT_TOXIN"/>
    <property type="match status" value="1"/>
</dbReference>
<evidence type="ECO:0000250" key="1">
    <source>
        <dbReference type="UniProtKB" id="Q10726"/>
    </source>
</evidence>
<evidence type="ECO:0000269" key="2">
    <source>
    </source>
</evidence>
<evidence type="ECO:0000303" key="3">
    <source>
    </source>
</evidence>
<evidence type="ECO:0000305" key="4"/>
<evidence type="ECO:0000305" key="5">
    <source>
    </source>
</evidence>
<accession>P0C166</accession>
<proteinExistence type="evidence at protein level"/>
<reference key="1">
    <citation type="journal article" date="2005" name="Mol. Pharmacol.">
        <title>Anuroctoxin, a new scorpion toxin of the Alpha-KTx 06 subfamily, is highly selective for Kv1.3 over IKCa1 ion channels of human T lymphocytes.</title>
        <authorList>
            <person name="Bagdany M."/>
            <person name="Batista C.V.F."/>
            <person name="Valdez-Cruz N.A."/>
            <person name="Somodi S."/>
            <person name="Rodriguez de la Vega R.C."/>
            <person name="Licea A.F."/>
            <person name="Varga Z."/>
            <person name="Gaspar R."/>
            <person name="Possani L.D."/>
            <person name="Panyi G."/>
        </authorList>
    </citation>
    <scope>PROTEIN SEQUENCE</scope>
    <scope>FUNCTION</scope>
    <scope>SUBUNIT</scope>
    <scope>DISULFIDE BONDS</scope>
    <scope>PYROGLUTAMATE FORMATION AT GLN-1</scope>
    <scope>AMIDATION AT LYS-35</scope>
    <scope>MASS SPECTROMETRY</scope>
    <source>
        <tissue>Venom</tissue>
    </source>
</reference>
<comment type="function">
    <text evidence="2">High affinity blocker of Kv1.3/KCNA3 channels of human T cells. Blocks Kv1.2/KCNA2 with an order of magnitude smaller than for Kv1.3/KCNA3.</text>
</comment>
<comment type="subunit">
    <text evidence="2">Monomer.</text>
</comment>
<comment type="subcellular location">
    <subcellularLocation>
        <location>Secreted</location>
    </subcellularLocation>
</comment>
<comment type="tissue specificity">
    <text>Expressed by the venom gland.</text>
</comment>
<comment type="domain">
    <text evidence="4">Has the structural arrangement of an alpha-helix connected to antiparallel beta-sheets by disulfide bonds (CS-alpha/beta).</text>
</comment>
<comment type="mass spectrometry" mass="4082.8" method="Electrospray" evidence="2"/>
<comment type="miscellaneous">
    <text evidence="5">Negative results: does not block the calcium-activated KCa3.1/KCNN4 potassium channels, Shaker IR, Kv1.1/KCNA1, and Kv2.1/KCNB1 potassium channels.</text>
</comment>
<comment type="similarity">
    <text evidence="4">Belongs to the short scorpion toxin superfamily. Potassium channel inhibitor family. Alpha-KTx 06 subfamily.</text>
</comment>
<feature type="chain" id="PRO_0000226963" description="Potassium channel toxin alpha-KTx 6.12">
    <location>
        <begin position="1"/>
        <end position="35"/>
    </location>
</feature>
<feature type="site" description="Basic residue of the functional dyad" evidence="1">
    <location>
        <position position="23"/>
    </location>
</feature>
<feature type="site" description="Aromatic residue of the functional dyad" evidence="1">
    <location>
        <position position="32"/>
    </location>
</feature>
<feature type="modified residue" description="Pyrrolidone carboxylic acid" evidence="2">
    <location>
        <position position="1"/>
    </location>
</feature>
<feature type="modified residue" description="Lysine amide" evidence="2">
    <location>
        <position position="35"/>
    </location>
</feature>
<feature type="disulfide bond" evidence="2">
    <location>
        <begin position="4"/>
        <end position="24"/>
    </location>
</feature>
<feature type="disulfide bond" evidence="2">
    <location>
        <begin position="10"/>
        <end position="29"/>
    </location>
</feature>
<feature type="disulfide bond" evidence="2">
    <location>
        <begin position="14"/>
        <end position="31"/>
    </location>
</feature>
<feature type="disulfide bond" evidence="2">
    <location>
        <begin position="19"/>
        <end position="34"/>
    </location>
</feature>
<name>KAX6C_ANUPH</name>
<organism>
    <name type="scientific">Anuroctonus phaiodactylus</name>
    <name type="common">Mafia scorpion</name>
    <dbReference type="NCBI Taxonomy" id="246982"/>
    <lineage>
        <taxon>Eukaryota</taxon>
        <taxon>Metazoa</taxon>
        <taxon>Ecdysozoa</taxon>
        <taxon>Arthropoda</taxon>
        <taxon>Chelicerata</taxon>
        <taxon>Arachnida</taxon>
        <taxon>Scorpiones</taxon>
        <taxon>Iurida</taxon>
        <taxon>Chactoidea</taxon>
        <taxon>Chactidae</taxon>
        <taxon>Uroctoninae</taxon>
        <taxon>Anuroctonus</taxon>
    </lineage>
</organism>
<protein>
    <recommendedName>
        <fullName evidence="3">Potassium channel toxin alpha-KTx 6.12</fullName>
    </recommendedName>
    <alternativeName>
        <fullName evidence="3">Anuroctoxin</fullName>
    </alternativeName>
</protein>
<sequence length="35" mass="4109">QKECTGPQHCTNFCRKNKCTHGKCMNRKCKCFNCK</sequence>
<keyword id="KW-0027">Amidation</keyword>
<keyword id="KW-0903">Direct protein sequencing</keyword>
<keyword id="KW-1015">Disulfide bond</keyword>
<keyword id="KW-0872">Ion channel impairing toxin</keyword>
<keyword id="KW-0528">Neurotoxin</keyword>
<keyword id="KW-0632">Potassium channel impairing toxin</keyword>
<keyword id="KW-0873">Pyrrolidone carboxylic acid</keyword>
<keyword id="KW-0964">Secreted</keyword>
<keyword id="KW-0800">Toxin</keyword>
<keyword id="KW-1220">Voltage-gated potassium channel impairing toxin</keyword>